<name>XT3_XENTR</name>
<reference evidence="2" key="1">
    <citation type="journal article" date="2001" name="Biochim. Biophys. Acta">
        <title>Antimicrobial peptides isolated from skin secretions of the diploid frog, Xenopus tropicalis (Pipidae).</title>
        <authorList>
            <person name="Ali M.F."/>
            <person name="Soto A."/>
            <person name="Knoop F.C."/>
            <person name="Conlon J.M."/>
        </authorList>
    </citation>
    <scope>PROTEIN SEQUENCE</scope>
    <scope>FUNCTION</scope>
    <scope>SUBCELLULAR LOCATION</scope>
    <scope>TISSUE SPECIFICITY</scope>
    <scope>MASS SPECTROMETRY</scope>
    <source>
        <tissue evidence="1">Skin secretion</tissue>
    </source>
</reference>
<proteinExistence type="evidence at protein level"/>
<feature type="peptide" id="PRO_0000043900" description="Antimicrobial peptide 3">
    <location>
        <begin position="1"/>
        <end position="25"/>
    </location>
</feature>
<accession>P84383</accession>
<sequence>GLASTLGSFLGKFAKGGAQAFLQPK</sequence>
<dbReference type="InParanoid" id="P84383"/>
<dbReference type="Proteomes" id="UP000008143">
    <property type="component" value="Unplaced"/>
</dbReference>
<dbReference type="GO" id="GO:0005576">
    <property type="term" value="C:extracellular region"/>
    <property type="evidence" value="ECO:0000314"/>
    <property type="project" value="UniProtKB"/>
</dbReference>
<dbReference type="GO" id="GO:0050829">
    <property type="term" value="P:defense response to Gram-negative bacterium"/>
    <property type="evidence" value="ECO:0000314"/>
    <property type="project" value="UniProtKB"/>
</dbReference>
<dbReference type="GO" id="GO:0050830">
    <property type="term" value="P:defense response to Gram-positive bacterium"/>
    <property type="evidence" value="ECO:0000314"/>
    <property type="project" value="UniProtKB"/>
</dbReference>
<organism>
    <name type="scientific">Xenopus tropicalis</name>
    <name type="common">Western clawed frog</name>
    <name type="synonym">Silurana tropicalis</name>
    <dbReference type="NCBI Taxonomy" id="8364"/>
    <lineage>
        <taxon>Eukaryota</taxon>
        <taxon>Metazoa</taxon>
        <taxon>Chordata</taxon>
        <taxon>Craniata</taxon>
        <taxon>Vertebrata</taxon>
        <taxon>Euteleostomi</taxon>
        <taxon>Amphibia</taxon>
        <taxon>Batrachia</taxon>
        <taxon>Anura</taxon>
        <taxon>Pipoidea</taxon>
        <taxon>Pipidae</taxon>
        <taxon>Xenopodinae</taxon>
        <taxon>Xenopus</taxon>
        <taxon>Silurana</taxon>
    </lineage>
</organism>
<comment type="function">
    <text evidence="1">Has antibacterial activity against Gram-positive bacterium S.aureus and Gram-negative bacterium E.coli, when in combination with XT1 and XT6.</text>
</comment>
<comment type="subcellular location">
    <subcellularLocation>
        <location evidence="1">Secreted</location>
    </subcellularLocation>
</comment>
<comment type="tissue specificity">
    <text evidence="1">Skin.</text>
</comment>
<comment type="mass spectrometry"/>
<comment type="similarity">
    <text evidence="2">Belongs to the gastrin/cholecystokinin family.</text>
</comment>
<keyword id="KW-0878">Amphibian defense peptide</keyword>
<keyword id="KW-0044">Antibiotic</keyword>
<keyword id="KW-0929">Antimicrobial</keyword>
<keyword id="KW-0903">Direct protein sequencing</keyword>
<keyword id="KW-1185">Reference proteome</keyword>
<keyword id="KW-0964">Secreted</keyword>
<evidence type="ECO:0000269" key="1">
    <source>
    </source>
</evidence>
<evidence type="ECO:0000305" key="2"/>
<protein>
    <recommendedName>
        <fullName>Antimicrobial peptide 3</fullName>
    </recommendedName>
    <alternativeName>
        <fullName>Levitide-like peptide</fullName>
    </alternativeName>
    <alternativeName>
        <fullName>XT-3</fullName>
    </alternativeName>
</protein>